<evidence type="ECO:0000255" key="1">
    <source>
        <dbReference type="HAMAP-Rule" id="MF_00081"/>
    </source>
</evidence>
<comment type="function">
    <text evidence="1">Negative regulator of class I heat shock genes (grpE-dnaK-dnaJ and groELS operons). Prevents heat-shock induction of these operons.</text>
</comment>
<comment type="similarity">
    <text evidence="1">Belongs to the HrcA family.</text>
</comment>
<feature type="chain" id="PRO_1000202552" description="Heat-inducible transcription repressor HrcA">
    <location>
        <begin position="1"/>
        <end position="345"/>
    </location>
</feature>
<organism>
    <name type="scientific">Listeria monocytogenes serotype 4b (strain CLIP80459)</name>
    <dbReference type="NCBI Taxonomy" id="568819"/>
    <lineage>
        <taxon>Bacteria</taxon>
        <taxon>Bacillati</taxon>
        <taxon>Bacillota</taxon>
        <taxon>Bacilli</taxon>
        <taxon>Bacillales</taxon>
        <taxon>Listeriaceae</taxon>
        <taxon>Listeria</taxon>
    </lineage>
</organism>
<dbReference type="EMBL" id="FM242711">
    <property type="protein sequence ID" value="CAS05247.1"/>
    <property type="molecule type" value="Genomic_DNA"/>
</dbReference>
<dbReference type="RefSeq" id="WP_003726026.1">
    <property type="nucleotide sequence ID" value="NC_012488.1"/>
</dbReference>
<dbReference type="SMR" id="C1KVC2"/>
<dbReference type="KEGG" id="lmc:Lm4b_01485"/>
<dbReference type="HOGENOM" id="CLU_050019_1_0_9"/>
<dbReference type="GO" id="GO:0003677">
    <property type="term" value="F:DNA binding"/>
    <property type="evidence" value="ECO:0007669"/>
    <property type="project" value="InterPro"/>
</dbReference>
<dbReference type="GO" id="GO:0045892">
    <property type="term" value="P:negative regulation of DNA-templated transcription"/>
    <property type="evidence" value="ECO:0007669"/>
    <property type="project" value="UniProtKB-UniRule"/>
</dbReference>
<dbReference type="FunFam" id="1.10.10.10:FF:000049">
    <property type="entry name" value="Heat-inducible transcription repressor HrcA"/>
    <property type="match status" value="1"/>
</dbReference>
<dbReference type="Gene3D" id="3.30.450.40">
    <property type="match status" value="1"/>
</dbReference>
<dbReference type="Gene3D" id="3.30.390.60">
    <property type="entry name" value="Heat-inducible transcription repressor hrca homolog, domain 3"/>
    <property type="match status" value="1"/>
</dbReference>
<dbReference type="Gene3D" id="1.10.10.10">
    <property type="entry name" value="Winged helix-like DNA-binding domain superfamily/Winged helix DNA-binding domain"/>
    <property type="match status" value="1"/>
</dbReference>
<dbReference type="HAMAP" id="MF_00081">
    <property type="entry name" value="HrcA"/>
    <property type="match status" value="1"/>
</dbReference>
<dbReference type="InterPro" id="IPR029016">
    <property type="entry name" value="GAF-like_dom_sf"/>
</dbReference>
<dbReference type="InterPro" id="IPR002571">
    <property type="entry name" value="HrcA"/>
</dbReference>
<dbReference type="InterPro" id="IPR021153">
    <property type="entry name" value="HrcA_C"/>
</dbReference>
<dbReference type="InterPro" id="IPR036388">
    <property type="entry name" value="WH-like_DNA-bd_sf"/>
</dbReference>
<dbReference type="InterPro" id="IPR036390">
    <property type="entry name" value="WH_DNA-bd_sf"/>
</dbReference>
<dbReference type="InterPro" id="IPR023120">
    <property type="entry name" value="WHTH_transcript_rep_HrcA_IDD"/>
</dbReference>
<dbReference type="NCBIfam" id="TIGR00331">
    <property type="entry name" value="hrcA"/>
    <property type="match status" value="1"/>
</dbReference>
<dbReference type="PANTHER" id="PTHR34824">
    <property type="entry name" value="HEAT-INDUCIBLE TRANSCRIPTION REPRESSOR HRCA"/>
    <property type="match status" value="1"/>
</dbReference>
<dbReference type="PANTHER" id="PTHR34824:SF1">
    <property type="entry name" value="HEAT-INDUCIBLE TRANSCRIPTION REPRESSOR HRCA"/>
    <property type="match status" value="1"/>
</dbReference>
<dbReference type="Pfam" id="PF01628">
    <property type="entry name" value="HrcA"/>
    <property type="match status" value="1"/>
</dbReference>
<dbReference type="PIRSF" id="PIRSF005485">
    <property type="entry name" value="HrcA"/>
    <property type="match status" value="1"/>
</dbReference>
<dbReference type="SUPFAM" id="SSF55781">
    <property type="entry name" value="GAF domain-like"/>
    <property type="match status" value="1"/>
</dbReference>
<dbReference type="SUPFAM" id="SSF46785">
    <property type="entry name" value="Winged helix' DNA-binding domain"/>
    <property type="match status" value="1"/>
</dbReference>
<protein>
    <recommendedName>
        <fullName evidence="1">Heat-inducible transcription repressor HrcA</fullName>
    </recommendedName>
</protein>
<proteinExistence type="inferred from homology"/>
<gene>
    <name evidence="1" type="primary">hrcA</name>
    <name type="ordered locus">Lm4b_01485</name>
</gene>
<accession>C1KVC2</accession>
<reference key="1">
    <citation type="journal article" date="2012" name="BMC Genomics">
        <title>Comparative genomics and transcriptomics of lineages I, II, and III strains of Listeria monocytogenes.</title>
        <authorList>
            <person name="Hain T."/>
            <person name="Ghai R."/>
            <person name="Billion A."/>
            <person name="Kuenne C.T."/>
            <person name="Steinweg C."/>
            <person name="Izar B."/>
            <person name="Mohamed W."/>
            <person name="Mraheil M."/>
            <person name="Domann E."/>
            <person name="Schaffrath S."/>
            <person name="Karst U."/>
            <person name="Goesmann A."/>
            <person name="Oehm S."/>
            <person name="Puhler A."/>
            <person name="Merkl R."/>
            <person name="Vorwerk S."/>
            <person name="Glaser P."/>
            <person name="Garrido P."/>
            <person name="Rusniok C."/>
            <person name="Buchrieser C."/>
            <person name="Goebel W."/>
            <person name="Chakraborty T."/>
        </authorList>
    </citation>
    <scope>NUCLEOTIDE SEQUENCE [LARGE SCALE GENOMIC DNA]</scope>
    <source>
        <strain>CLIP80459</strain>
    </source>
</reference>
<sequence length="345" mass="39681">MLTERQLLIFRAIIDHFTWTIQPVGSKNLLKEKGLPYSSATIRNEMGVLEEYGFIEKTHSSSGRVPSEKGYRFYVDYLLQPKKLDKSDRQMIRSFFSENYYEMEGLIQNSALMLSDLTNYTSILLGPEATKNHLSGFRFVPINNFQAMLILITDQGHVDNHLVTIPEGTTLSDIERMVNILNERLVGLSLDDLKVQIPMEVKELLGKHVRNYESFMHVFSDSFAQASQQKVYFGGKTNILNQPEFHDINKVREMLHLMEEEQDVYELFRDIPDGLQVKIGRENNNSLMEDCSIITATYNIAGERVGGIVLLGPTRMEYSRMMGLVDVMSRDLTDVLTKLYRDNQN</sequence>
<keyword id="KW-0678">Repressor</keyword>
<keyword id="KW-0346">Stress response</keyword>
<keyword id="KW-0804">Transcription</keyword>
<keyword id="KW-0805">Transcription regulation</keyword>
<name>HRCA_LISMC</name>